<dbReference type="EMBL" id="AF102990">
    <property type="protein sequence ID" value="AAD16817.1"/>
    <property type="molecule type" value="Genomic_DNA"/>
</dbReference>
<dbReference type="EMBL" id="AY150843">
    <property type="protein sequence ID" value="AAN37515.1"/>
    <property type="molecule type" value="Genomic_DNA"/>
</dbReference>
<dbReference type="RefSeq" id="NP_052394.1">
    <property type="nucleotide sequence ID" value="NC_002120.1"/>
</dbReference>
<dbReference type="RefSeq" id="NP_783667.1">
    <property type="nucleotide sequence ID" value="NC_004564.1"/>
</dbReference>
<dbReference type="RefSeq" id="NP_863516.1">
    <property type="nucleotide sequence ID" value="NC_005017.1"/>
</dbReference>
<dbReference type="RefSeq" id="WP_005176740.1">
    <property type="nucleotide sequence ID" value="NZ_NWMR01000033.1"/>
</dbReference>
<dbReference type="RefSeq" id="WP_010891212.1">
    <property type="nucleotide sequence ID" value="NZ_KN150737.1"/>
</dbReference>
<dbReference type="DNASU" id="1239125"/>
<dbReference type="GeneID" id="31412305"/>
<dbReference type="KEGG" id="yet:CH48_4219"/>
<dbReference type="OMA" id="PYFWQKS"/>
<dbReference type="InterPro" id="IPR022797">
    <property type="entry name" value="LcrR/CesD2"/>
</dbReference>
<dbReference type="InterPro" id="IPR013405">
    <property type="entry name" value="T3SS_LcrR"/>
</dbReference>
<dbReference type="NCBIfam" id="TIGR02572">
    <property type="entry name" value="LcrR"/>
    <property type="match status" value="1"/>
</dbReference>
<dbReference type="Pfam" id="PF09621">
    <property type="entry name" value="LcrR"/>
    <property type="match status" value="1"/>
</dbReference>
<evidence type="ECO:0000250" key="1"/>
<accession>P0C2V7</accession>
<accession>O68549</accession>
<accession>Q93KU2</accession>
<reference key="1">
    <citation type="submission" date="1998-10" db="EMBL/GenBank/DDBJ databases">
        <title>Detailed genetic map of the pYVe227 plasmid of Yersinia enterocolitica serotype O:9.</title>
        <authorList>
            <person name="Iriarte M."/>
            <person name="Lambermont I."/>
            <person name="Kerbourch C."/>
            <person name="Cornelis G.R."/>
        </authorList>
    </citation>
    <scope>NUCLEOTIDE SEQUENCE [GENOMIC DNA]</scope>
    <source>
        <strain>W22703 / Serotype O:9 / Biotype 2</strain>
        <plasmid>pYVe227</plasmid>
    </source>
</reference>
<reference key="2">
    <citation type="journal article" date="2003" name="Res. Microbiol.">
        <title>DNA sequence and analysis of the pYVa127/90 virulence plasmid of Yersinia enterocolitica strain A127/90.</title>
        <authorList>
            <person name="Foultier B."/>
            <person name="Cornelis G.R."/>
        </authorList>
    </citation>
    <scope>NUCLEOTIDE SEQUENCE [GENOMIC DNA]</scope>
    <source>
        <strain>A127/90 / Serotype O:8 / Biotype 1B</strain>
        <plasmid>pYVa127/90</plasmid>
    </source>
</reference>
<proteinExistence type="inferred from homology"/>
<protein>
    <recommendedName>
        <fullName>Low calcium response locus protein R</fullName>
    </recommendedName>
</protein>
<gene>
    <name type="primary">lcrR</name>
</gene>
<keyword id="KW-0106">Calcium</keyword>
<keyword id="KW-0614">Plasmid</keyword>
<organism>
    <name type="scientific">Yersinia enterocolitica</name>
    <dbReference type="NCBI Taxonomy" id="630"/>
    <lineage>
        <taxon>Bacteria</taxon>
        <taxon>Pseudomonadati</taxon>
        <taxon>Pseudomonadota</taxon>
        <taxon>Gammaproteobacteria</taxon>
        <taxon>Enterobacterales</taxon>
        <taxon>Yersiniaceae</taxon>
        <taxon>Yersinia</taxon>
    </lineage>
</organism>
<comment type="function">
    <text evidence="1">Involved in the down-regulation of lcrGVH transcription in the presence or absence of calcium and is necessary for lcrG protein expression in the absence of calcium. Plays an important role in the regulation of the low-calcium response (By similarity).</text>
</comment>
<feature type="chain" id="PRO_0000084373" description="Low calcium response locus protein R">
    <location>
        <begin position="1"/>
        <end position="146"/>
    </location>
</feature>
<feature type="sequence variant" description="In plasmid pYVa127/90.">
    <original>T</original>
    <variation>A</variation>
    <location>
        <position position="25"/>
    </location>
</feature>
<name>LCRR_YEREN</name>
<sequence>MMEDPLIPWLTEHGLVCHPHTLSGTPISLGSAFQLAGLKLAWRVEIEQRRVWIVLIQRVEQRRGLKNPFAALYMLANAARAVLGPDYYLYGNVDVLAGSSLSTQRLAHFYRRWTGAKELSTGWFSLKVSQVITLSNMKKRQNNGFA</sequence>
<geneLocation type="plasmid">
    <name>pYVe227</name>
</geneLocation>
<geneLocation type="plasmid">
    <name>pYVa127/90</name>
</geneLocation>